<evidence type="ECO:0000250" key="1">
    <source>
        <dbReference type="UniProtKB" id="P03423"/>
    </source>
</evidence>
<evidence type="ECO:0000250" key="2">
    <source>
        <dbReference type="UniProtKB" id="P20895"/>
    </source>
</evidence>
<evidence type="ECO:0000255" key="3"/>
<evidence type="ECO:0000256" key="4">
    <source>
        <dbReference type="SAM" id="MobiDB-lite"/>
    </source>
</evidence>
<evidence type="ECO:0000305" key="5"/>
<organism>
    <name type="scientific">Bovine respiratory syncytial virus (strain Wbh)</name>
    <name type="common">BRS</name>
    <dbReference type="NCBI Taxonomy" id="82825"/>
    <lineage>
        <taxon>Viruses</taxon>
        <taxon>Riboviria</taxon>
        <taxon>Orthornavirae</taxon>
        <taxon>Negarnaviricota</taxon>
        <taxon>Haploviricotina</taxon>
        <taxon>Monjiviricetes</taxon>
        <taxon>Mononegavirales</taxon>
        <taxon>Pneumoviridae</taxon>
        <taxon>Orthopneumovirus</taxon>
        <taxon>Orthopneumovirus bovis</taxon>
    </lineage>
</organism>
<name>GLYC_BRSVW</name>
<dbReference type="EMBL" id="Y08717">
    <property type="protein sequence ID" value="CAA69967.1"/>
    <property type="molecule type" value="mRNA"/>
</dbReference>
<dbReference type="SMR" id="O10687"/>
<dbReference type="GlyCosmos" id="O10687">
    <property type="glycosylation" value="11 sites, No reported glycans"/>
</dbReference>
<dbReference type="GO" id="GO:0005576">
    <property type="term" value="C:extracellular region"/>
    <property type="evidence" value="ECO:0007669"/>
    <property type="project" value="UniProtKB-SubCell"/>
</dbReference>
<dbReference type="GO" id="GO:0020002">
    <property type="term" value="C:host cell plasma membrane"/>
    <property type="evidence" value="ECO:0007669"/>
    <property type="project" value="UniProtKB-SubCell"/>
</dbReference>
<dbReference type="GO" id="GO:0016020">
    <property type="term" value="C:membrane"/>
    <property type="evidence" value="ECO:0007669"/>
    <property type="project" value="UniProtKB-KW"/>
</dbReference>
<dbReference type="GO" id="GO:0055036">
    <property type="term" value="C:virion membrane"/>
    <property type="evidence" value="ECO:0007669"/>
    <property type="project" value="UniProtKB-SubCell"/>
</dbReference>
<dbReference type="GO" id="GO:0046718">
    <property type="term" value="P:symbiont entry into host cell"/>
    <property type="evidence" value="ECO:0007669"/>
    <property type="project" value="UniProtKB-KW"/>
</dbReference>
<dbReference type="GO" id="GO:0019062">
    <property type="term" value="P:virion attachment to host cell"/>
    <property type="evidence" value="ECO:0007669"/>
    <property type="project" value="UniProtKB-KW"/>
</dbReference>
<dbReference type="InterPro" id="IPR000925">
    <property type="entry name" value="G_prot"/>
</dbReference>
<dbReference type="Pfam" id="PF00802">
    <property type="entry name" value="Glycoprotein_G"/>
    <property type="match status" value="1"/>
</dbReference>
<keyword id="KW-0024">Alternative initiation</keyword>
<keyword id="KW-1015">Disulfide bond</keyword>
<keyword id="KW-0325">Glycoprotein</keyword>
<keyword id="KW-1032">Host cell membrane</keyword>
<keyword id="KW-1043">Host membrane</keyword>
<keyword id="KW-0945">Host-virus interaction</keyword>
<keyword id="KW-0472">Membrane</keyword>
<keyword id="KW-0964">Secreted</keyword>
<keyword id="KW-0812">Transmembrane</keyword>
<keyword id="KW-1133">Transmembrane helix</keyword>
<keyword id="KW-1161">Viral attachment to host cell</keyword>
<keyword id="KW-0899">Viral immunoevasion</keyword>
<keyword id="KW-0946">Virion</keyword>
<keyword id="KW-1160">Virus entry into host cell</keyword>
<accession>O10687</accession>
<feature type="chain" id="PRO_0000142852" description="Major surface glycoprotein G">
    <location>
        <begin position="1"/>
        <end position="263"/>
    </location>
</feature>
<feature type="chain" id="PRO_0000451321" description="Mature secreted glycoprotein G">
    <location>
        <begin position="66"/>
        <end position="263"/>
    </location>
</feature>
<feature type="topological domain" description="Cytoplasmic" evidence="3">
    <location>
        <begin position="1"/>
        <end position="37"/>
    </location>
</feature>
<feature type="transmembrane region" description="Helical" evidence="3">
    <location>
        <begin position="38"/>
        <end position="66"/>
    </location>
</feature>
<feature type="topological domain" description="Extracellular" evidence="3">
    <location>
        <begin position="67"/>
        <end position="263"/>
    </location>
</feature>
<feature type="region of interest" description="Disordered" evidence="4">
    <location>
        <begin position="70"/>
        <end position="166"/>
    </location>
</feature>
<feature type="region of interest" description="Binding to host heparan sulfate" evidence="1">
    <location>
        <begin position="187"/>
        <end position="198"/>
    </location>
</feature>
<feature type="region of interest" description="Disordered" evidence="4">
    <location>
        <begin position="192"/>
        <end position="263"/>
    </location>
</feature>
<feature type="compositionally biased region" description="Polar residues" evidence="4">
    <location>
        <begin position="73"/>
        <end position="90"/>
    </location>
</feature>
<feature type="compositionally biased region" description="Polar residues" evidence="4">
    <location>
        <begin position="98"/>
        <end position="128"/>
    </location>
</feature>
<feature type="compositionally biased region" description="Polar residues" evidence="4">
    <location>
        <begin position="150"/>
        <end position="166"/>
    </location>
</feature>
<feature type="compositionally biased region" description="Basic residues" evidence="4">
    <location>
        <begin position="204"/>
        <end position="222"/>
    </location>
</feature>
<feature type="compositionally biased region" description="Polar residues" evidence="4">
    <location>
        <begin position="231"/>
        <end position="243"/>
    </location>
</feature>
<feature type="compositionally biased region" description="Polar residues" evidence="4">
    <location>
        <begin position="251"/>
        <end position="263"/>
    </location>
</feature>
<feature type="site" description="Cleavage" evidence="1">
    <location>
        <begin position="65"/>
        <end position="66"/>
    </location>
</feature>
<feature type="glycosylation site" description="O-linked (GalNAc...) threonine; by host" evidence="1">
    <location>
        <position position="72"/>
    </location>
</feature>
<feature type="glycosylation site" description="O-linked (GalNAc...) threonine; by host" evidence="1">
    <location>
        <position position="80"/>
    </location>
</feature>
<feature type="glycosylation site" description="N-linked (GlcNAc...) asparagine; by host" evidence="3">
    <location>
        <position position="85"/>
    </location>
</feature>
<feature type="glycosylation site" description="O-linked (GalNAc...) threonine; by host" evidence="1">
    <location>
        <position position="87"/>
    </location>
</feature>
<feature type="glycosylation site" description="O-linked (GalNAc...) threonine; by host" evidence="1">
    <location>
        <position position="92"/>
    </location>
</feature>
<feature type="glycosylation site" description="N-linked (GlcNAc...) asparagine; by host" evidence="3">
    <location>
        <position position="127"/>
    </location>
</feature>
<feature type="glycosylation site" description="O-linked (GalNAc...) threonine; by host" evidence="3">
    <location>
        <position position="139"/>
    </location>
</feature>
<feature type="glycosylation site" description="N-linked (GlcNAc...) asparagine; by host" evidence="3">
    <location>
        <position position="163"/>
    </location>
</feature>
<feature type="glycosylation site" description="O-linked (GalNAc...) threonine; by host" evidence="3">
    <location>
        <position position="199"/>
    </location>
</feature>
<feature type="glycosylation site" description="O-linked (GalNAc...) threonine; by host" evidence="3">
    <location>
        <position position="215"/>
    </location>
</feature>
<feature type="glycosylation site" description="N-linked (GlcNAc...) asparagine; by host" evidence="3">
    <location>
        <position position="233"/>
    </location>
</feature>
<feature type="disulfide bond" evidence="1">
    <location>
        <begin position="173"/>
        <end position="186"/>
    </location>
</feature>
<feature type="disulfide bond" evidence="1">
    <location>
        <begin position="176"/>
        <end position="182"/>
    </location>
</feature>
<feature type="splice variant" id="VSP_036520" description="In isoform Secreted glycoprotein G." evidence="1">
    <location>
        <begin position="1"/>
        <end position="47"/>
    </location>
</feature>
<proteinExistence type="evidence at transcript level"/>
<reference key="1">
    <citation type="journal article" date="1997" name="Virology">
        <title>Antigenically distinct G glycoproteins of BRSV strains share a high degree of genetic homogeneity.</title>
        <authorList>
            <person name="Furze J."/>
            <person name="Roberts S."/>
            <person name="Wertz G."/>
            <person name="Taylor G."/>
        </authorList>
    </citation>
    <scope>NUCLEOTIDE SEQUENCE [MRNA]</scope>
</reference>
<sequence>MSNHTHHLKFKTLKRAWKASKYFIVGLSCLYKFNLKSLVQTALTTLAMITLTSLVITAIIYISVGNAKAKPTSKPTIQQTQQPQNHTSPFFTEHNYKSTHTSIQGTTLPQLPNTDTTRETTYSHSINETQDRKTKSQSTLPATRKPPINPSGSNPPENHQDHNNSQTLPHVPCSTCEGNPACSSLCQIGPERASSRAPTITLKKTPKPKTTKKPTKTTIHRKTSPEAKPQPKNNTAAPQQGILSSPEHHTNQPTTQIQQHTSI</sequence>
<organismHost>
    <name type="scientific">Bos taurus</name>
    <name type="common">Bovine</name>
    <dbReference type="NCBI Taxonomy" id="9913"/>
</organismHost>
<gene>
    <name type="primary">G</name>
</gene>
<protein>
    <recommendedName>
        <fullName>Major surface glycoprotein G</fullName>
    </recommendedName>
    <alternativeName>
        <fullName>Attachment glycoprotein G</fullName>
    </alternativeName>
    <alternativeName>
        <fullName>Membrane-bound glycoprotein</fullName>
        <shortName>mG</shortName>
    </alternativeName>
    <component>
        <recommendedName>
            <fullName evidence="2">Mature secreted glycoprotein G</fullName>
            <shortName evidence="2">Mature sG</shortName>
        </recommendedName>
    </component>
</protein>
<comment type="function">
    <molecule>Isoform Membrane-bound glycoprotein G</molecule>
    <text evidence="1">Attaches the virion to the host cell membrane by interacting with heparan sulfate, initiating the infection. Unlike the other paramyxovirus attachment proteins, lacks both neuraminidase and hemagglutinating activities.</text>
</comment>
<comment type="function">
    <molecule>Isoform Secreted glycoprotein G</molecule>
    <text evidence="1">Helps the virus escape antibody-dependent restriction of replication by acting as an antigen decoy and by modulating the activity of leukocytes bearing Fc-gamma receptors.</text>
</comment>
<comment type="subunit">
    <molecule>Isoform Membrane-bound glycoprotein G</molecule>
    <text evidence="1">Homooligomer. Interacts (via N-terminus) with protein M. Part of a complex composed of F1, F2 and G glycoproteins. Interacts with protein SH. Interacts with host heparate sulfate; this interaction probably participates in the viral attachment to the host cell.</text>
</comment>
<comment type="subcellular location">
    <molecule>Isoform Membrane-bound glycoprotein G</molecule>
    <subcellularLocation>
        <location evidence="1">Virion membrane</location>
        <topology evidence="1">Single-pass type II membrane protein</topology>
    </subcellularLocation>
    <subcellularLocation>
        <location evidence="1">Host cell membrane</location>
        <topology evidence="1">Single-pass type II membrane protein</topology>
    </subcellularLocation>
</comment>
<comment type="subcellular location">
    <molecule>Isoform Secreted glycoprotein G</molecule>
    <subcellularLocation>
        <location evidence="2">Secreted</location>
    </subcellularLocation>
    <text evidence="2">The protein is shed from infected cells before the appearance of progeny virus. The initiation at the downstream methionine removes a portion of the transmembrane domain. The remaining hydrophobic portion of the sG protein is essential for translocating it into the lumen of the ER during translation and would likely maintain its membrane association until a proteolytic event releases the mature sG protein into the medium.</text>
</comment>
<comment type="alternative products">
    <event type="alternative initiation"/>
    <isoform>
        <id>O10687-1</id>
        <name>Membrane-bound glycoprotein G</name>
        <sequence type="displayed"/>
    </isoform>
    <isoform>
        <id>O10687-2</id>
        <name>Secreted glycoprotein G</name>
        <sequence type="described" ref="VSP_036520"/>
    </isoform>
</comment>
<comment type="domain">
    <molecule>Isoform Membrane-bound glycoprotein G</molecule>
    <text evidence="1">Contains a linear heparin binding domain essential for virus attachment to the host.</text>
</comment>
<comment type="PTM">
    <molecule>Isoform Secreted glycoprotein G</molecule>
    <text evidence="2">Cleaved to give rise to the mature sG protein which lacks the transmembrane domain.</text>
</comment>
<comment type="PTM">
    <molecule>Isoform Membrane-bound glycoprotein G</molecule>
    <text evidence="1">N- and O-glycosylated. May carry 30-40 separate O-linked carbohydrate chains distributed among the serine and threonine residues.</text>
</comment>
<comment type="PTM">
    <molecule>Isoform Membrane-bound glycoprotein G</molecule>
    <text evidence="1">Palmitoylated.</text>
</comment>
<comment type="similarity">
    <text evidence="5">Belongs to the pneumoviruses glycoprotein G family.</text>
</comment>